<organism>
    <name type="scientific">Pectobacterium atrosepticum (strain SCRI 1043 / ATCC BAA-672)</name>
    <name type="common">Erwinia carotovora subsp. atroseptica</name>
    <dbReference type="NCBI Taxonomy" id="218491"/>
    <lineage>
        <taxon>Bacteria</taxon>
        <taxon>Pseudomonadati</taxon>
        <taxon>Pseudomonadota</taxon>
        <taxon>Gammaproteobacteria</taxon>
        <taxon>Enterobacterales</taxon>
        <taxon>Pectobacteriaceae</taxon>
        <taxon>Pectobacterium</taxon>
    </lineage>
</organism>
<evidence type="ECO:0000255" key="1">
    <source>
        <dbReference type="HAMAP-Rule" id="MF_01058"/>
    </source>
</evidence>
<evidence type="ECO:0000256" key="2">
    <source>
        <dbReference type="SAM" id="MobiDB-lite"/>
    </source>
</evidence>
<reference key="1">
    <citation type="journal article" date="2004" name="Proc. Natl. Acad. Sci. U.S.A.">
        <title>Genome sequence of the enterobacterial phytopathogen Erwinia carotovora subsp. atroseptica and characterization of virulence factors.</title>
        <authorList>
            <person name="Bell K.S."/>
            <person name="Sebaihia M."/>
            <person name="Pritchard L."/>
            <person name="Holden M.T.G."/>
            <person name="Hyman L.J."/>
            <person name="Holeva M.C."/>
            <person name="Thomson N.R."/>
            <person name="Bentley S.D."/>
            <person name="Churcher L.J.C."/>
            <person name="Mungall K."/>
            <person name="Atkin R."/>
            <person name="Bason N."/>
            <person name="Brooks K."/>
            <person name="Chillingworth T."/>
            <person name="Clark K."/>
            <person name="Doggett J."/>
            <person name="Fraser A."/>
            <person name="Hance Z."/>
            <person name="Hauser H."/>
            <person name="Jagels K."/>
            <person name="Moule S."/>
            <person name="Norbertczak H."/>
            <person name="Ormond D."/>
            <person name="Price C."/>
            <person name="Quail M.A."/>
            <person name="Sanders M."/>
            <person name="Walker D."/>
            <person name="Whitehead S."/>
            <person name="Salmond G.P.C."/>
            <person name="Birch P.R.J."/>
            <person name="Parkhill J."/>
            <person name="Toth I.K."/>
        </authorList>
    </citation>
    <scope>NUCLEOTIDE SEQUENCE [LARGE SCALE GENOMIC DNA]</scope>
    <source>
        <strain>SCRI 1043 / ATCC BAA-672</strain>
    </source>
</reference>
<dbReference type="EMBL" id="BX950851">
    <property type="protein sequence ID" value="CAG72947.1"/>
    <property type="molecule type" value="Genomic_DNA"/>
</dbReference>
<dbReference type="RefSeq" id="WP_011091672.1">
    <property type="nucleotide sequence ID" value="NC_004547.2"/>
</dbReference>
<dbReference type="SMR" id="Q6DB75"/>
<dbReference type="STRING" id="218491.ECA0024"/>
<dbReference type="GeneID" id="57206881"/>
<dbReference type="KEGG" id="eca:ECA0024"/>
<dbReference type="PATRIC" id="fig|218491.5.peg.23"/>
<dbReference type="eggNOG" id="COG3078">
    <property type="taxonomic scope" value="Bacteria"/>
</dbReference>
<dbReference type="HOGENOM" id="CLU_094104_2_0_6"/>
<dbReference type="OrthoDB" id="5677577at2"/>
<dbReference type="Proteomes" id="UP000007966">
    <property type="component" value="Chromosome"/>
</dbReference>
<dbReference type="GO" id="GO:0005096">
    <property type="term" value="F:GTPase activator activity"/>
    <property type="evidence" value="ECO:0007669"/>
    <property type="project" value="UniProtKB-KW"/>
</dbReference>
<dbReference type="GO" id="GO:0042254">
    <property type="term" value="P:ribosome biogenesis"/>
    <property type="evidence" value="ECO:0007669"/>
    <property type="project" value="UniProtKB-KW"/>
</dbReference>
<dbReference type="HAMAP" id="MF_01058">
    <property type="entry name" value="GAP_YihI"/>
    <property type="match status" value="1"/>
</dbReference>
<dbReference type="InterPro" id="IPR007336">
    <property type="entry name" value="YihI"/>
</dbReference>
<dbReference type="NCBIfam" id="NF003560">
    <property type="entry name" value="PRK05244.1-1"/>
    <property type="match status" value="1"/>
</dbReference>
<dbReference type="Pfam" id="PF04220">
    <property type="entry name" value="YihI"/>
    <property type="match status" value="1"/>
</dbReference>
<feature type="chain" id="PRO_1000136386" description="Der GTPase-activating protein YihI">
    <location>
        <begin position="1"/>
        <end position="184"/>
    </location>
</feature>
<feature type="region of interest" description="Disordered" evidence="2">
    <location>
        <begin position="1"/>
        <end position="106"/>
    </location>
</feature>
<feature type="region of interest" description="Disordered" evidence="2">
    <location>
        <begin position="159"/>
        <end position="184"/>
    </location>
</feature>
<feature type="compositionally biased region" description="Basic and acidic residues" evidence="2">
    <location>
        <begin position="8"/>
        <end position="32"/>
    </location>
</feature>
<feature type="compositionally biased region" description="Acidic residues" evidence="2">
    <location>
        <begin position="159"/>
        <end position="169"/>
    </location>
</feature>
<sequence length="184" mass="20746">MNRPVKGVADKAEKSKVKRKTREELEREARERKRDKKHRGHSAGSRTQEKASTDQNSGQRKVADPRIGSKKPVQLGVLDSAIVKPKPKSKPSEPVEKVVAAKPTMSPEEELAMLENDTRLDALLDRLDSGETLSAKDQSWVDETLDRIDILMEELGIELGDDDEEEQQEDMLQLLKRNNPKDAL</sequence>
<keyword id="KW-0343">GTPase activation</keyword>
<keyword id="KW-1185">Reference proteome</keyword>
<keyword id="KW-0690">Ribosome biogenesis</keyword>
<protein>
    <recommendedName>
        <fullName evidence="1">Der GTPase-activating protein YihI</fullName>
    </recommendedName>
</protein>
<gene>
    <name evidence="1" type="primary">yihI</name>
    <name type="ordered locus">ECA0024</name>
</gene>
<proteinExistence type="inferred from homology"/>
<name>YIHI_PECAS</name>
<comment type="function">
    <text evidence="1">A GTPase-activating protein (GAP) that modifies Der/EngA GTPase function. May play a role in ribosome biogenesis.</text>
</comment>
<comment type="subunit">
    <text evidence="1">Interacts with Der.</text>
</comment>
<comment type="similarity">
    <text evidence="1">Belongs to the YihI family.</text>
</comment>
<accession>Q6DB75</accession>